<organism>
    <name type="scientific">Schizosaccharomyces pombe (strain 972 / ATCC 24843)</name>
    <name type="common">Fission yeast</name>
    <dbReference type="NCBI Taxonomy" id="284812"/>
    <lineage>
        <taxon>Eukaryota</taxon>
        <taxon>Fungi</taxon>
        <taxon>Dikarya</taxon>
        <taxon>Ascomycota</taxon>
        <taxon>Taphrinomycotina</taxon>
        <taxon>Schizosaccharomycetes</taxon>
        <taxon>Schizosaccharomycetales</taxon>
        <taxon>Schizosaccharomycetaceae</taxon>
        <taxon>Schizosaccharomyces</taxon>
    </lineage>
</organism>
<reference key="1">
    <citation type="journal article" date="2002" name="Nature">
        <title>The genome sequence of Schizosaccharomyces pombe.</title>
        <authorList>
            <person name="Wood V."/>
            <person name="Gwilliam R."/>
            <person name="Rajandream M.A."/>
            <person name="Lyne M.H."/>
            <person name="Lyne R."/>
            <person name="Stewart A."/>
            <person name="Sgouros J.G."/>
            <person name="Peat N."/>
            <person name="Hayles J."/>
            <person name="Baker S.G."/>
            <person name="Basham D."/>
            <person name="Bowman S."/>
            <person name="Brooks K."/>
            <person name="Brown D."/>
            <person name="Brown S."/>
            <person name="Chillingworth T."/>
            <person name="Churcher C.M."/>
            <person name="Collins M."/>
            <person name="Connor R."/>
            <person name="Cronin A."/>
            <person name="Davis P."/>
            <person name="Feltwell T."/>
            <person name="Fraser A."/>
            <person name="Gentles S."/>
            <person name="Goble A."/>
            <person name="Hamlin N."/>
            <person name="Harris D.E."/>
            <person name="Hidalgo J."/>
            <person name="Hodgson G."/>
            <person name="Holroyd S."/>
            <person name="Hornsby T."/>
            <person name="Howarth S."/>
            <person name="Huckle E.J."/>
            <person name="Hunt S."/>
            <person name="Jagels K."/>
            <person name="James K.D."/>
            <person name="Jones L."/>
            <person name="Jones M."/>
            <person name="Leather S."/>
            <person name="McDonald S."/>
            <person name="McLean J."/>
            <person name="Mooney P."/>
            <person name="Moule S."/>
            <person name="Mungall K.L."/>
            <person name="Murphy L.D."/>
            <person name="Niblett D."/>
            <person name="Odell C."/>
            <person name="Oliver K."/>
            <person name="O'Neil S."/>
            <person name="Pearson D."/>
            <person name="Quail M.A."/>
            <person name="Rabbinowitsch E."/>
            <person name="Rutherford K.M."/>
            <person name="Rutter S."/>
            <person name="Saunders D."/>
            <person name="Seeger K."/>
            <person name="Sharp S."/>
            <person name="Skelton J."/>
            <person name="Simmonds M.N."/>
            <person name="Squares R."/>
            <person name="Squares S."/>
            <person name="Stevens K."/>
            <person name="Taylor K."/>
            <person name="Taylor R.G."/>
            <person name="Tivey A."/>
            <person name="Walsh S.V."/>
            <person name="Warren T."/>
            <person name="Whitehead S."/>
            <person name="Woodward J.R."/>
            <person name="Volckaert G."/>
            <person name="Aert R."/>
            <person name="Robben J."/>
            <person name="Grymonprez B."/>
            <person name="Weltjens I."/>
            <person name="Vanstreels E."/>
            <person name="Rieger M."/>
            <person name="Schaefer M."/>
            <person name="Mueller-Auer S."/>
            <person name="Gabel C."/>
            <person name="Fuchs M."/>
            <person name="Duesterhoeft A."/>
            <person name="Fritzc C."/>
            <person name="Holzer E."/>
            <person name="Moestl D."/>
            <person name="Hilbert H."/>
            <person name="Borzym K."/>
            <person name="Langer I."/>
            <person name="Beck A."/>
            <person name="Lehrach H."/>
            <person name="Reinhardt R."/>
            <person name="Pohl T.M."/>
            <person name="Eger P."/>
            <person name="Zimmermann W."/>
            <person name="Wedler H."/>
            <person name="Wambutt R."/>
            <person name="Purnelle B."/>
            <person name="Goffeau A."/>
            <person name="Cadieu E."/>
            <person name="Dreano S."/>
            <person name="Gloux S."/>
            <person name="Lelaure V."/>
            <person name="Mottier S."/>
            <person name="Galibert F."/>
            <person name="Aves S.J."/>
            <person name="Xiang Z."/>
            <person name="Hunt C."/>
            <person name="Moore K."/>
            <person name="Hurst S.M."/>
            <person name="Lucas M."/>
            <person name="Rochet M."/>
            <person name="Gaillardin C."/>
            <person name="Tallada V.A."/>
            <person name="Garzon A."/>
            <person name="Thode G."/>
            <person name="Daga R.R."/>
            <person name="Cruzado L."/>
            <person name="Jimenez J."/>
            <person name="Sanchez M."/>
            <person name="del Rey F."/>
            <person name="Benito J."/>
            <person name="Dominguez A."/>
            <person name="Revuelta J.L."/>
            <person name="Moreno S."/>
            <person name="Armstrong J."/>
            <person name="Forsburg S.L."/>
            <person name="Cerutti L."/>
            <person name="Lowe T."/>
            <person name="McCombie W.R."/>
            <person name="Paulsen I."/>
            <person name="Potashkin J."/>
            <person name="Shpakovski G.V."/>
            <person name="Ussery D."/>
            <person name="Barrell B.G."/>
            <person name="Nurse P."/>
        </authorList>
    </citation>
    <scope>NUCLEOTIDE SEQUENCE [LARGE SCALE GENOMIC DNA]</scope>
    <source>
        <strain>972 / ATCC 24843</strain>
    </source>
</reference>
<reference key="2">
    <citation type="journal article" date="2008" name="J. Proteome Res.">
        <title>Phosphoproteome analysis of fission yeast.</title>
        <authorList>
            <person name="Wilson-Grady J.T."/>
            <person name="Villen J."/>
            <person name="Gygi S.P."/>
        </authorList>
    </citation>
    <scope>PHOSPHORYLATION [LARGE SCALE ANALYSIS] AT SER-952</scope>
    <scope>IDENTIFICATION BY MASS SPECTROMETRY</scope>
</reference>
<sequence length="965" mass="107276">MTMVYSDNTSIITSAGGLMALLDEQERELQVHALLKIYEFIDQLWPEISDDVTKIEVMYEDHSFPERELAALVVSKVYYYLGEYDEALLFALSSGPKFLHDKNSDYKETLIFKCIDMFIHKSAELYKNPKADPLDERLSGVVEGIFQKCYAKNEWRHVLGIAIEAHRLDIIEYILNADKETDLKPYVLELAMTVVLDIEFRNRLLRLLLSSFLTETEPDYFSVGKCVVHLNDASVAAKLLMKLSSQNDDKSLLTAYQLAFDLEDSAPQEFLNSVMDLLPSPSVANSEEDANADSKKEDSSPCGYIIRILSGEQTVKYDREFLYAHNNTDMLILNRTKDSLEARNSVFHNAVTFANAFMNFGTSSDSFFRDNLSWLSKANNWSKFTATAALGVIHRGYYNQAMNILRPYLPEEDAPSSSTYSEGGAFYAMGLIHANHGRGVTEYLREQLKHTEDEIVQYGLLLGIGLTGMASRDETLYESVKTILFNDNAVAGSAAGISMGLIMLGTASSAAIDEMLQYAHETQHEKIIRGLGIGIALIVYGRQQEADGIIKELNNDLDPTLRYAGMFATALAYCGTSNSKIVRDVLHISVSDVNDDVRRAAVCALGFICFKDPNALISTVELLVDSYNPHVRYGSAIALGIACANSGSNAALDLLSRLVEDATDFVRQGAMIAQAMILTQHNDQLNSKVSGIRKHFEQVINEKHEDALAKLGATLAQGIIDAGGRNVTIALQTATGSLKLSAIVGLTVFLQYWYWFPLTHFMSLSFSPTALIGLDKNLNAPKFSFISNVRPKLFAYPPKSVQPTAKTVQKVETAVLSTTVKAQARAKRAEREKASKGSNDDEMKIDKKTTEEKEATPMEMDEEKSQDISINGNSKKEEPKSETLENFTRVVPAQLPYISFNLNGRYYPVRKFTGGVLMLIDRESDKAPDLIELNRDAVPASADTEPGEQEASPPEDFEYPFDDDD</sequence>
<dbReference type="EMBL" id="CU329671">
    <property type="protein sequence ID" value="CAA21078.1"/>
    <property type="molecule type" value="Genomic_DNA"/>
</dbReference>
<dbReference type="PIR" id="T39718">
    <property type="entry name" value="T39718"/>
</dbReference>
<dbReference type="RefSeq" id="NP_596381.1">
    <property type="nucleotide sequence ID" value="NM_001022302.2"/>
</dbReference>
<dbReference type="SMR" id="O74762"/>
<dbReference type="BioGRID" id="276724">
    <property type="interactions" value="18"/>
</dbReference>
<dbReference type="ComplexPortal" id="CPX-9077">
    <property type="entry name" value="26S proteasome complex"/>
</dbReference>
<dbReference type="FunCoup" id="O74762">
    <property type="interactions" value="899"/>
</dbReference>
<dbReference type="IntAct" id="O74762">
    <property type="interactions" value="2"/>
</dbReference>
<dbReference type="STRING" id="284812.O74762"/>
<dbReference type="iPTMnet" id="O74762"/>
<dbReference type="SwissPalm" id="O74762"/>
<dbReference type="PaxDb" id="4896-SPBC17D11.07c.1"/>
<dbReference type="EnsemblFungi" id="SPBC17D11.07c.1">
    <property type="protein sequence ID" value="SPBC17D11.07c.1:pep"/>
    <property type="gene ID" value="SPBC17D11.07c"/>
</dbReference>
<dbReference type="GeneID" id="2540191"/>
<dbReference type="KEGG" id="spo:2540191"/>
<dbReference type="PomBase" id="SPBC17D11.07c">
    <property type="gene designation" value="rpn2"/>
</dbReference>
<dbReference type="VEuPathDB" id="FungiDB:SPBC17D11.07c"/>
<dbReference type="eggNOG" id="KOG2062">
    <property type="taxonomic scope" value="Eukaryota"/>
</dbReference>
<dbReference type="HOGENOM" id="CLU_002323_0_0_1"/>
<dbReference type="InParanoid" id="O74762"/>
<dbReference type="OMA" id="IMFGRQE"/>
<dbReference type="PhylomeDB" id="O74762"/>
<dbReference type="Reactome" id="R-SPO-1236978">
    <property type="pathway name" value="Cross-presentation of soluble exogenous antigens (endosomes)"/>
</dbReference>
<dbReference type="Reactome" id="R-SPO-350562">
    <property type="pathway name" value="Regulation of ornithine decarboxylase (ODC)"/>
</dbReference>
<dbReference type="Reactome" id="R-SPO-5687128">
    <property type="pathway name" value="MAPK6/MAPK4 signaling"/>
</dbReference>
<dbReference type="Reactome" id="R-SPO-5689603">
    <property type="pathway name" value="UCH proteinases"/>
</dbReference>
<dbReference type="Reactome" id="R-SPO-5689880">
    <property type="pathway name" value="Ub-specific processing proteases"/>
</dbReference>
<dbReference type="Reactome" id="R-SPO-6798695">
    <property type="pathway name" value="Neutrophil degranulation"/>
</dbReference>
<dbReference type="Reactome" id="R-SPO-68949">
    <property type="pathway name" value="Orc1 removal from chromatin"/>
</dbReference>
<dbReference type="Reactome" id="R-SPO-69017">
    <property type="pathway name" value="CDK-mediated phosphorylation and removal of Cdc6"/>
</dbReference>
<dbReference type="Reactome" id="R-SPO-69601">
    <property type="pathway name" value="Ubiquitin Mediated Degradation of Phosphorylated Cdc25A"/>
</dbReference>
<dbReference type="Reactome" id="R-SPO-75815">
    <property type="pathway name" value="Ubiquitin-dependent degradation of Cyclin D"/>
</dbReference>
<dbReference type="Reactome" id="R-SPO-8854050">
    <property type="pathway name" value="FBXL7 down-regulates AURKA during mitotic entry and in early mitosis"/>
</dbReference>
<dbReference type="Reactome" id="R-SPO-8948751">
    <property type="pathway name" value="Regulation of PTEN stability and activity"/>
</dbReference>
<dbReference type="Reactome" id="R-SPO-8951664">
    <property type="pathway name" value="Neddylation"/>
</dbReference>
<dbReference type="Reactome" id="R-SPO-9755511">
    <property type="pathway name" value="KEAP1-NFE2L2 pathway"/>
</dbReference>
<dbReference type="Reactome" id="R-SPO-983168">
    <property type="pathway name" value="Antigen processing: Ubiquitination &amp; Proteasome degradation"/>
</dbReference>
<dbReference type="Reactome" id="R-SPO-9907900">
    <property type="pathway name" value="Proteasome assembly"/>
</dbReference>
<dbReference type="PRO" id="PR:O74762"/>
<dbReference type="Proteomes" id="UP000002485">
    <property type="component" value="Chromosome II"/>
</dbReference>
<dbReference type="GO" id="GO:0005829">
    <property type="term" value="C:cytosol"/>
    <property type="evidence" value="ECO:0007005"/>
    <property type="project" value="PomBase"/>
</dbReference>
<dbReference type="GO" id="GO:0005634">
    <property type="term" value="C:nucleus"/>
    <property type="evidence" value="ECO:0007005"/>
    <property type="project" value="PomBase"/>
</dbReference>
<dbReference type="GO" id="GO:0008540">
    <property type="term" value="C:proteasome regulatory particle, base subcomplex"/>
    <property type="evidence" value="ECO:0000314"/>
    <property type="project" value="PomBase"/>
</dbReference>
<dbReference type="GO" id="GO:0034515">
    <property type="term" value="C:proteasome storage granule"/>
    <property type="evidence" value="ECO:0000318"/>
    <property type="project" value="GO_Central"/>
</dbReference>
<dbReference type="GO" id="GO:0030234">
    <property type="term" value="F:enzyme regulator activity"/>
    <property type="evidence" value="ECO:0007669"/>
    <property type="project" value="InterPro"/>
</dbReference>
<dbReference type="GO" id="GO:0043161">
    <property type="term" value="P:proteasome-mediated ubiquitin-dependent protein catabolic process"/>
    <property type="evidence" value="ECO:0000318"/>
    <property type="project" value="GO_Central"/>
</dbReference>
<dbReference type="GO" id="GO:0042176">
    <property type="term" value="P:regulation of protein catabolic process"/>
    <property type="evidence" value="ECO:0007669"/>
    <property type="project" value="InterPro"/>
</dbReference>
<dbReference type="FunFam" id="1.25.10.10:FF:000017">
    <property type="entry name" value="26S proteasome non-ATPase regulatory subunit 1"/>
    <property type="match status" value="1"/>
</dbReference>
<dbReference type="Gene3D" id="1.25.10.10">
    <property type="entry name" value="Leucine-rich Repeat Variant"/>
    <property type="match status" value="1"/>
</dbReference>
<dbReference type="InterPro" id="IPR016642">
    <property type="entry name" value="26S_Psome_Rpn2"/>
</dbReference>
<dbReference type="InterPro" id="IPR011989">
    <property type="entry name" value="ARM-like"/>
</dbReference>
<dbReference type="InterPro" id="IPR016024">
    <property type="entry name" value="ARM-type_fold"/>
</dbReference>
<dbReference type="InterPro" id="IPR002015">
    <property type="entry name" value="Proteasome/cyclosome_rpt"/>
</dbReference>
<dbReference type="InterPro" id="IPR048570">
    <property type="entry name" value="PSMD1_RPN2_N"/>
</dbReference>
<dbReference type="InterPro" id="IPR040623">
    <property type="entry name" value="RPN2_C"/>
</dbReference>
<dbReference type="PANTHER" id="PTHR10943">
    <property type="entry name" value="26S PROTEASOME NON-ATPASE REGULATORY SUBUNIT"/>
    <property type="match status" value="1"/>
</dbReference>
<dbReference type="PANTHER" id="PTHR10943:SF2">
    <property type="entry name" value="26S PROTEASOME NON-ATPASE REGULATORY SUBUNIT 1"/>
    <property type="match status" value="1"/>
</dbReference>
<dbReference type="Pfam" id="PF13646">
    <property type="entry name" value="HEAT_2"/>
    <property type="match status" value="1"/>
</dbReference>
<dbReference type="Pfam" id="PF01851">
    <property type="entry name" value="PC_rep"/>
    <property type="match status" value="3"/>
</dbReference>
<dbReference type="Pfam" id="PF18004">
    <property type="entry name" value="RPN2_C"/>
    <property type="match status" value="1"/>
</dbReference>
<dbReference type="Pfam" id="PF21505">
    <property type="entry name" value="RPN2_N"/>
    <property type="match status" value="1"/>
</dbReference>
<dbReference type="PIRSF" id="PIRSF015947">
    <property type="entry name" value="26S_Psome_Rpn2"/>
    <property type="match status" value="1"/>
</dbReference>
<dbReference type="SUPFAM" id="SSF48371">
    <property type="entry name" value="ARM repeat"/>
    <property type="match status" value="1"/>
</dbReference>
<comment type="function">
    <text evidence="1">Acts as a regulatory subunit of the 26S proteasome which is involved in the ATP-dependent degradation of ubiquitinated proteins.</text>
</comment>
<comment type="similarity">
    <text evidence="4">Belongs to the proteasome subunit S1 family.</text>
</comment>
<gene>
    <name type="primary">rpn2</name>
    <name type="ORF">SPBC17D11.07c</name>
</gene>
<accession>O74762</accession>
<evidence type="ECO:0000250" key="1"/>
<evidence type="ECO:0000256" key="2">
    <source>
        <dbReference type="SAM" id="MobiDB-lite"/>
    </source>
</evidence>
<evidence type="ECO:0000269" key="3">
    <source>
    </source>
</evidence>
<evidence type="ECO:0000305" key="4"/>
<feature type="chain" id="PRO_0000173807" description="26S proteasome regulatory subunit rpn2">
    <location>
        <begin position="1"/>
        <end position="965"/>
    </location>
</feature>
<feature type="repeat" description="PC 1">
    <location>
        <begin position="385"/>
        <end position="418"/>
    </location>
</feature>
<feature type="repeat" description="PC 2">
    <location>
        <begin position="424"/>
        <end position="457"/>
    </location>
</feature>
<feature type="repeat" description="PC 3">
    <location>
        <begin position="459"/>
        <end position="493"/>
    </location>
</feature>
<feature type="repeat" description="PC 4">
    <location>
        <begin position="494"/>
        <end position="528"/>
    </location>
</feature>
<feature type="repeat" description="PC 5">
    <location>
        <begin position="530"/>
        <end position="563"/>
    </location>
</feature>
<feature type="repeat" description="PC 6">
    <location>
        <begin position="564"/>
        <end position="599"/>
    </location>
</feature>
<feature type="repeat" description="PC 7">
    <location>
        <begin position="600"/>
        <end position="632"/>
    </location>
</feature>
<feature type="repeat" description="PC 8">
    <location>
        <begin position="634"/>
        <end position="668"/>
    </location>
</feature>
<feature type="repeat" description="PC 9">
    <location>
        <begin position="669"/>
        <end position="699"/>
    </location>
</feature>
<feature type="repeat" description="PC 10">
    <location>
        <begin position="712"/>
        <end position="744"/>
    </location>
</feature>
<feature type="region of interest" description="Disordered" evidence="2">
    <location>
        <begin position="826"/>
        <end position="883"/>
    </location>
</feature>
<feature type="region of interest" description="Disordered" evidence="2">
    <location>
        <begin position="934"/>
        <end position="965"/>
    </location>
</feature>
<feature type="compositionally biased region" description="Basic and acidic residues" evidence="2">
    <location>
        <begin position="827"/>
        <end position="856"/>
    </location>
</feature>
<feature type="compositionally biased region" description="Basic and acidic residues" evidence="2">
    <location>
        <begin position="874"/>
        <end position="883"/>
    </location>
</feature>
<feature type="compositionally biased region" description="Acidic residues" evidence="2">
    <location>
        <begin position="945"/>
        <end position="965"/>
    </location>
</feature>
<feature type="modified residue" description="Phosphoserine" evidence="3">
    <location>
        <position position="952"/>
    </location>
</feature>
<name>RPN2_SCHPO</name>
<proteinExistence type="evidence at protein level"/>
<keyword id="KW-0597">Phosphoprotein</keyword>
<keyword id="KW-0647">Proteasome</keyword>
<keyword id="KW-1185">Reference proteome</keyword>
<keyword id="KW-0677">Repeat</keyword>
<protein>
    <recommendedName>
        <fullName>26S proteasome regulatory subunit rpn2</fullName>
    </recommendedName>
</protein>